<gene>
    <name type="primary">psiA</name>
    <name type="ORF">DDB_G0291982</name>
</gene>
<reference key="1">
    <citation type="journal article" date="2004" name="Dev. Growth Differ.">
        <title>A gene encoding, prespore-cell-inducing factor in Dictyostelium discoideum.</title>
        <authorList>
            <person name="Kawata T."/>
            <person name="Nakagawa M."/>
            <person name="Shimada N."/>
            <person name="Fujii S."/>
            <person name="Oohata A.A."/>
        </authorList>
    </citation>
    <scope>NUCLEOTIDE SEQUENCE [MRNA]</scope>
    <scope>PROTEIN SEQUENCE OF 20-26</scope>
    <scope>FUNCTION</scope>
    <scope>DEVELOPMENTAL STAGE</scope>
    <scope>DISRUPTION PHENOTYPE</scope>
</reference>
<reference key="2">
    <citation type="journal article" date="2005" name="Nature">
        <title>The genome of the social amoeba Dictyostelium discoideum.</title>
        <authorList>
            <person name="Eichinger L."/>
            <person name="Pachebat J.A."/>
            <person name="Gloeckner G."/>
            <person name="Rajandream M.A."/>
            <person name="Sucgang R."/>
            <person name="Berriman M."/>
            <person name="Song J."/>
            <person name="Olsen R."/>
            <person name="Szafranski K."/>
            <person name="Xu Q."/>
            <person name="Tunggal B."/>
            <person name="Kummerfeld S."/>
            <person name="Madera M."/>
            <person name="Konfortov B.A."/>
            <person name="Rivero F."/>
            <person name="Bankier A.T."/>
            <person name="Lehmann R."/>
            <person name="Hamlin N."/>
            <person name="Davies R."/>
            <person name="Gaudet P."/>
            <person name="Fey P."/>
            <person name="Pilcher K."/>
            <person name="Chen G."/>
            <person name="Saunders D."/>
            <person name="Sodergren E.J."/>
            <person name="Davis P."/>
            <person name="Kerhornou A."/>
            <person name="Nie X."/>
            <person name="Hall N."/>
            <person name="Anjard C."/>
            <person name="Hemphill L."/>
            <person name="Bason N."/>
            <person name="Farbrother P."/>
            <person name="Desany B."/>
            <person name="Just E."/>
            <person name="Morio T."/>
            <person name="Rost R."/>
            <person name="Churcher C.M."/>
            <person name="Cooper J."/>
            <person name="Haydock S."/>
            <person name="van Driessche N."/>
            <person name="Cronin A."/>
            <person name="Goodhead I."/>
            <person name="Muzny D.M."/>
            <person name="Mourier T."/>
            <person name="Pain A."/>
            <person name="Lu M."/>
            <person name="Harper D."/>
            <person name="Lindsay R."/>
            <person name="Hauser H."/>
            <person name="James K.D."/>
            <person name="Quiles M."/>
            <person name="Madan Babu M."/>
            <person name="Saito T."/>
            <person name="Buchrieser C."/>
            <person name="Wardroper A."/>
            <person name="Felder M."/>
            <person name="Thangavelu M."/>
            <person name="Johnson D."/>
            <person name="Knights A."/>
            <person name="Loulseged H."/>
            <person name="Mungall K.L."/>
            <person name="Oliver K."/>
            <person name="Price C."/>
            <person name="Quail M.A."/>
            <person name="Urushihara H."/>
            <person name="Hernandez J."/>
            <person name="Rabbinowitsch E."/>
            <person name="Steffen D."/>
            <person name="Sanders M."/>
            <person name="Ma J."/>
            <person name="Kohara Y."/>
            <person name="Sharp S."/>
            <person name="Simmonds M.N."/>
            <person name="Spiegler S."/>
            <person name="Tivey A."/>
            <person name="Sugano S."/>
            <person name="White B."/>
            <person name="Walker D."/>
            <person name="Woodward J.R."/>
            <person name="Winckler T."/>
            <person name="Tanaka Y."/>
            <person name="Shaulsky G."/>
            <person name="Schleicher M."/>
            <person name="Weinstock G.M."/>
            <person name="Rosenthal A."/>
            <person name="Cox E.C."/>
            <person name="Chisholm R.L."/>
            <person name="Gibbs R.A."/>
            <person name="Loomis W.F."/>
            <person name="Platzer M."/>
            <person name="Kay R.R."/>
            <person name="Williams J.G."/>
            <person name="Dear P.H."/>
            <person name="Noegel A.A."/>
            <person name="Barrell B.G."/>
            <person name="Kuspa A."/>
        </authorList>
    </citation>
    <scope>NUCLEOTIDE SEQUENCE [LARGE SCALE GENOMIC DNA]</scope>
    <source>
        <strain>AX4</strain>
    </source>
</reference>
<reference key="3">
    <citation type="journal article" date="1999" name="Biochem. J.">
        <title>A prespore-cell-inducing factor in Dictyostelium discoideum: its purification and characterization.</title>
        <authorList>
            <person name="Nakagawa M."/>
            <person name="Oohata A.A."/>
            <person name="Tojo H."/>
            <person name="Fujii S."/>
        </authorList>
    </citation>
    <scope>PROTEIN SEQUENCE OF 54-67; 90-95 AND 119-146</scope>
    <scope>FUNCTION</scope>
    <scope>GLYCOSYLATION</scope>
    <scope>SUBUNIT</scope>
    <scope>SUBCELLULAR LOCATION</scope>
</reference>
<accession>Q968Z6</accession>
<accession>Q54DV4</accession>
<dbReference type="EMBL" id="AB053203">
    <property type="protein sequence ID" value="BAB47241.1"/>
    <property type="molecule type" value="mRNA"/>
</dbReference>
<dbReference type="EMBL" id="AAFI02000187">
    <property type="protein sequence ID" value="EAL61347.1"/>
    <property type="molecule type" value="Genomic_DNA"/>
</dbReference>
<dbReference type="RefSeq" id="XP_629768.1">
    <property type="nucleotide sequence ID" value="XM_629766.1"/>
</dbReference>
<dbReference type="FunCoup" id="Q968Z6">
    <property type="interactions" value="13"/>
</dbReference>
<dbReference type="GlyCosmos" id="Q968Z6">
    <property type="glycosylation" value="6 sites, No reported glycans"/>
</dbReference>
<dbReference type="GlyGen" id="Q968Z6">
    <property type="glycosylation" value="11 sites"/>
</dbReference>
<dbReference type="PaxDb" id="44689-DDB0201657"/>
<dbReference type="EnsemblProtists" id="EAL61347">
    <property type="protein sequence ID" value="EAL61347"/>
    <property type="gene ID" value="DDB_G0291982"/>
</dbReference>
<dbReference type="GeneID" id="8628444"/>
<dbReference type="KEGG" id="ddi:DDB_G0291982"/>
<dbReference type="dictyBase" id="DDB_G0291982">
    <property type="gene designation" value="psiA"/>
</dbReference>
<dbReference type="VEuPathDB" id="AmoebaDB:DDB_G0291982"/>
<dbReference type="HOGENOM" id="CLU_024170_0_0_1"/>
<dbReference type="InParanoid" id="Q968Z6"/>
<dbReference type="PhylomeDB" id="Q968Z6"/>
<dbReference type="PRO" id="PR:Q968Z6"/>
<dbReference type="Proteomes" id="UP000002195">
    <property type="component" value="Chromosome 6"/>
</dbReference>
<dbReference type="GO" id="GO:0005576">
    <property type="term" value="C:extracellular region"/>
    <property type="evidence" value="ECO:0000314"/>
    <property type="project" value="dictyBase"/>
</dbReference>
<dbReference type="GO" id="GO:0008083">
    <property type="term" value="F:growth factor activity"/>
    <property type="evidence" value="ECO:0000304"/>
    <property type="project" value="dictyBase"/>
</dbReference>
<dbReference type="GO" id="GO:0030154">
    <property type="term" value="P:cell differentiation"/>
    <property type="evidence" value="ECO:0007669"/>
    <property type="project" value="UniProtKB-KW"/>
</dbReference>
<dbReference type="GO" id="GO:0031286">
    <property type="term" value="P:negative regulation of sorocarp stalk cell differentiation"/>
    <property type="evidence" value="ECO:0000315"/>
    <property type="project" value="dictyBase"/>
</dbReference>
<dbReference type="GO" id="GO:1901263">
    <property type="term" value="P:positive regulation of sorocarp spore cell differentiation"/>
    <property type="evidence" value="ECO:0000314"/>
    <property type="project" value="dictyBase"/>
</dbReference>
<dbReference type="InterPro" id="IPR011874">
    <property type="entry name" value="Fibro_Slime"/>
</dbReference>
<dbReference type="InterPro" id="IPR037524">
    <property type="entry name" value="PA14/GLEYA"/>
</dbReference>
<dbReference type="InterPro" id="IPR011658">
    <property type="entry name" value="PA14_dom"/>
</dbReference>
<dbReference type="InterPro" id="IPR051154">
    <property type="entry name" value="Prespore-cell_inducing_factor"/>
</dbReference>
<dbReference type="NCBIfam" id="TIGR02148">
    <property type="entry name" value="Fibro_Slime"/>
    <property type="match status" value="1"/>
</dbReference>
<dbReference type="PANTHER" id="PTHR31137:SF29">
    <property type="entry name" value="PROTEIN PSIA-RELATED"/>
    <property type="match status" value="1"/>
</dbReference>
<dbReference type="PANTHER" id="PTHR31137">
    <property type="entry name" value="PROTEIN PSIB-RELATED-RELATED"/>
    <property type="match status" value="1"/>
</dbReference>
<dbReference type="Pfam" id="PF07691">
    <property type="entry name" value="PA14"/>
    <property type="match status" value="1"/>
</dbReference>
<dbReference type="PRINTS" id="PR01217">
    <property type="entry name" value="PRICHEXTENSN"/>
</dbReference>
<dbReference type="SMART" id="SM00758">
    <property type="entry name" value="PA14"/>
    <property type="match status" value="1"/>
</dbReference>
<dbReference type="PROSITE" id="PS51820">
    <property type="entry name" value="PA14"/>
    <property type="match status" value="1"/>
</dbReference>
<evidence type="ECO:0000255" key="1"/>
<evidence type="ECO:0000255" key="2">
    <source>
        <dbReference type="PROSITE-ProRule" id="PRU01164"/>
    </source>
</evidence>
<evidence type="ECO:0000256" key="3">
    <source>
        <dbReference type="SAM" id="MobiDB-lite"/>
    </source>
</evidence>
<evidence type="ECO:0000269" key="4">
    <source>
    </source>
</evidence>
<evidence type="ECO:0000269" key="5">
    <source>
    </source>
</evidence>
<evidence type="ECO:0000305" key="6"/>
<evidence type="ECO:0000305" key="7">
    <source>
    </source>
</evidence>
<keyword id="KW-0217">Developmental protein</keyword>
<keyword id="KW-0221">Differentiation</keyword>
<keyword id="KW-0903">Direct protein sequencing</keyword>
<keyword id="KW-0325">Glycoprotein</keyword>
<keyword id="KW-0339">Growth factor</keyword>
<keyword id="KW-1185">Reference proteome</keyword>
<keyword id="KW-0964">Secreted</keyword>
<keyword id="KW-0732">Signal</keyword>
<protein>
    <recommendedName>
        <fullName>Protein psiA</fullName>
    </recommendedName>
    <alternativeName>
        <fullName>Prespore-cell-inducing factor A</fullName>
    </alternativeName>
</protein>
<name>PSIA_DICDI</name>
<feature type="signal peptide" evidence="5">
    <location>
        <begin position="1"/>
        <end position="19"/>
    </location>
</feature>
<feature type="chain" id="PRO_0000327543" description="Protein psiA">
    <location>
        <begin position="20"/>
        <end position="557"/>
    </location>
</feature>
<feature type="domain" description="PA14" evidence="2">
    <location>
        <begin position="116"/>
        <end position="261"/>
    </location>
</feature>
<feature type="region of interest" description="Disordered" evidence="3">
    <location>
        <begin position="355"/>
        <end position="451"/>
    </location>
</feature>
<feature type="compositionally biased region" description="Low complexity" evidence="3">
    <location>
        <begin position="355"/>
        <end position="404"/>
    </location>
</feature>
<feature type="glycosylation site" description="N-linked (GlcNAc...) asparagine" evidence="1">
    <location>
        <position position="72"/>
    </location>
</feature>
<feature type="glycosylation site" description="N-linked (GlcNAc...) asparagine" evidence="1">
    <location>
        <position position="99"/>
    </location>
</feature>
<feature type="glycosylation site" description="N-linked (GlcNAc...) asparagine" evidence="1">
    <location>
        <position position="155"/>
    </location>
</feature>
<feature type="glycosylation site" description="N-linked (GlcNAc...) asparagine" evidence="1">
    <location>
        <position position="176"/>
    </location>
</feature>
<feature type="glycosylation site" description="N-linked (GlcNAc...) asparagine" evidence="1">
    <location>
        <position position="320"/>
    </location>
</feature>
<feature type="glycosylation site" description="N-linked (GlcNAc...) asparagine" evidence="1">
    <location>
        <position position="329"/>
    </location>
</feature>
<sequence length="557" mass="62300">MKLLIYLFILTFYKTIVLTQTPSTHLDVDITIYDQLPLYNNNFEPETGSLTKNLVQTTLGSDGLPVLNSYSNLTYSNKNGRMYSPELFKYFFAPNQISNTTFNCGRNFPIKKQLKLLRTASGNYIYDNDFFFPIDYEGFDTDPANRIYKDDESTNKTYHNYHFCFQFDNRFLFKGNETFKFTGDDDVWVFINKQLVVDLGGTHPAASSSVDLSTLGLTVGKVYPFNFFYCERHTSRSTIRIETSLELYCDKYDYCGVCNGDGSTCCNPITDCNDDDLCTNDVCPPSDTVIDPSLPISFYCQHHPTPDPLVSDKCFESVCNSTTGSWFLNATICVEKEGLINTGCDGNTGCIYEPPTQTPTETPTQTPTETPSQTPTETPSQTPTETPSQTPTCTQHPTPTPTCTEHIKTPKPTPTPTCTKHPKPTPTCTEHTKTPKPTKTLKPTPTPKPTQTPKVPQCGKCEKLSSCKTYCEKKDCDDCQRELDGYKFDRCKTYSCDPIKGCIKTDKCKQGNDPCLKPVCNQYTGFCSQERVVSDKCKCDDKGKKGFGLGIGIGINA</sequence>
<proteinExistence type="evidence at protein level"/>
<comment type="function">
    <text evidence="4 5">Growth factor that can induce isolated amoebae to differentiate into prespore cells.</text>
</comment>
<comment type="subunit">
    <text evidence="7">Homodimer.</text>
</comment>
<comment type="subcellular location">
    <subcellularLocation>
        <location evidence="4">Secreted</location>
    </subcellularLocation>
</comment>
<comment type="developmental stage">
    <text evidence="5">Expressed maximally at the loose mound stage.</text>
</comment>
<comment type="PTM">
    <text evidence="4">N-glycosylated.</text>
</comment>
<comment type="disruption phenotype">
    <text evidence="5">Cells appear to develop normally; however, conditioned medium from these mutants show reduced prespore-cell-inducing activity. Conditioned medium from mutant show no cell division inducing activity.</text>
</comment>
<comment type="similarity">
    <text evidence="6">Belongs to the prespore-cell-inducing factor family.</text>
</comment>
<organism>
    <name type="scientific">Dictyostelium discoideum</name>
    <name type="common">Social amoeba</name>
    <dbReference type="NCBI Taxonomy" id="44689"/>
    <lineage>
        <taxon>Eukaryota</taxon>
        <taxon>Amoebozoa</taxon>
        <taxon>Evosea</taxon>
        <taxon>Eumycetozoa</taxon>
        <taxon>Dictyostelia</taxon>
        <taxon>Dictyosteliales</taxon>
        <taxon>Dictyosteliaceae</taxon>
        <taxon>Dictyostelium</taxon>
    </lineage>
</organism>